<reference key="1">
    <citation type="journal article" date="1999" name="J. Biol. Chem.">
        <title>Pleckstrin 2, a widely expressed paralog of pleckstrin involved in actin rearrangement.</title>
        <authorList>
            <person name="Hu M."/>
            <person name="Bauman E.M."/>
            <person name="Roll R.L."/>
            <person name="Yeilding N."/>
            <person name="Abrams C.S."/>
        </authorList>
    </citation>
    <scope>NUCLEOTIDE SEQUENCE [MRNA]</scope>
</reference>
<reference key="2">
    <citation type="journal article" date="1999" name="Biochem. Biophys. Res. Commun.">
        <title>Cloning and expression of pleckstrin 2, a novel member of the pleckstrin family.</title>
        <authorList>
            <person name="Inazu T."/>
            <person name="Yamada K."/>
            <person name="Miyamoto K."/>
        </authorList>
    </citation>
    <scope>NUCLEOTIDE SEQUENCE [MRNA]</scope>
</reference>
<reference key="3">
    <citation type="journal article" date="2004" name="Genome Res.">
        <title>The status, quality, and expansion of the NIH full-length cDNA project: the Mammalian Gene Collection (MGC).</title>
        <authorList>
            <consortium name="The MGC Project Team"/>
        </authorList>
    </citation>
    <scope>NUCLEOTIDE SEQUENCE [LARGE SCALE MRNA]</scope>
    <source>
        <strain>FVB/N</strain>
        <tissue>Colon</tissue>
    </source>
</reference>
<reference key="4">
    <citation type="submission" date="2004-04" db="PDB data bank">
        <title>Solution structure of the DEP domain of mouse pleckstrin2.</title>
        <authorList>
            <consortium name="RIKEN structural genomics initiative (RSGI)"/>
        </authorList>
    </citation>
    <scope>STRUCTURE BY NMR OF 129-235</scope>
</reference>
<accession>Q9WV52</accession>
<name>PLEK2_MOUSE</name>
<keyword id="KW-0002">3D-structure</keyword>
<keyword id="KW-0007">Acetylation</keyword>
<keyword id="KW-1003">Cell membrane</keyword>
<keyword id="KW-0966">Cell projection</keyword>
<keyword id="KW-0963">Cytoplasm</keyword>
<keyword id="KW-0206">Cytoskeleton</keyword>
<keyword id="KW-0472">Membrane</keyword>
<keyword id="KW-0597">Phosphoprotein</keyword>
<keyword id="KW-1185">Reference proteome</keyword>
<keyword id="KW-0677">Repeat</keyword>
<evidence type="ECO:0000250" key="1">
    <source>
        <dbReference type="UniProtKB" id="Q9NYT0"/>
    </source>
</evidence>
<evidence type="ECO:0000255" key="2">
    <source>
        <dbReference type="PROSITE-ProRule" id="PRU00066"/>
    </source>
</evidence>
<evidence type="ECO:0000255" key="3">
    <source>
        <dbReference type="PROSITE-ProRule" id="PRU00145"/>
    </source>
</evidence>
<evidence type="ECO:0007829" key="4">
    <source>
        <dbReference type="PDB" id="1V3F"/>
    </source>
</evidence>
<gene>
    <name type="primary">Plek2</name>
</gene>
<comment type="function">
    <text>May help orchestrate cytoskeletal arrangement. Contribute to lamellipodia formation. Overexpression of pleckstrin 2 causes large lamellipodia and peripheral ruffle formation.</text>
</comment>
<comment type="subcellular location">
    <subcellularLocation>
        <location>Cell projection</location>
        <location>Lamellipodium membrane</location>
        <topology>Peripheral membrane protein</topology>
    </subcellularLocation>
    <subcellularLocation>
        <location>Cytoplasm</location>
        <location>Cytoskeleton</location>
    </subcellularLocation>
</comment>
<comment type="tissue specificity">
    <text>Ubiquitous. Most abundant in the thymus, large bowel, small bowel, stomach, and prostate.</text>
</comment>
<sequence>MEDGVLKEGFLVKRGHIVHNWKARWFILRQNTLLYYKLEGGRRVTPPKGRIVLDGCTITCPCLEYENRPLLIKLKTRTSTEYFLEACSREERDSWAFEITGAIHAGQPGKIQQLHILKNSFKLPPHISLHRIVDKMHDTSTGIRPSPNMEQGSTYKKTFLGSSLVDWLISSNFAASRLEAVTLASMLMEENFLRPVGVRSMGAIRSGDLAEQFLDDSTALYTFAESYKKKVSSKEEISLSTMELSGTVVKQGYLSKQGHKRKNWKVRRFVLRKDPAFLHYYDPSKEENRPVGGFSLRGSLVSALEDNGVPTGVKGNVQGNLFKVITKDDTHYYIQASSKAERAEWIEAIKKLT</sequence>
<dbReference type="EMBL" id="AF157600">
    <property type="protein sequence ID" value="AAD42973.1"/>
    <property type="molecule type" value="mRNA"/>
</dbReference>
<dbReference type="EMBL" id="AF170564">
    <property type="protein sequence ID" value="AAD46924.1"/>
    <property type="molecule type" value="mRNA"/>
</dbReference>
<dbReference type="EMBL" id="BC028902">
    <property type="protein sequence ID" value="AAH28902.1"/>
    <property type="molecule type" value="mRNA"/>
</dbReference>
<dbReference type="CCDS" id="CCDS26004.1"/>
<dbReference type="PIR" id="JC7128">
    <property type="entry name" value="JC7128"/>
</dbReference>
<dbReference type="RefSeq" id="NP_038766.1">
    <property type="nucleotide sequence ID" value="NM_013738.3"/>
</dbReference>
<dbReference type="PDB" id="1V3F">
    <property type="method" value="NMR"/>
    <property type="chains" value="A=129-235"/>
</dbReference>
<dbReference type="PDBsum" id="1V3F"/>
<dbReference type="SMR" id="Q9WV52"/>
<dbReference type="FunCoup" id="Q9WV52">
    <property type="interactions" value="679"/>
</dbReference>
<dbReference type="STRING" id="10090.ENSMUSP00000021544"/>
<dbReference type="GlyGen" id="Q9WV52">
    <property type="glycosylation" value="1 site"/>
</dbReference>
<dbReference type="iPTMnet" id="Q9WV52"/>
<dbReference type="PhosphoSitePlus" id="Q9WV52"/>
<dbReference type="PaxDb" id="10090-ENSMUSP00000021544"/>
<dbReference type="PeptideAtlas" id="Q9WV52"/>
<dbReference type="ProteomicsDB" id="288250"/>
<dbReference type="Antibodypedia" id="96">
    <property type="antibodies" value="87 antibodies from 20 providers"/>
</dbReference>
<dbReference type="DNASU" id="27260"/>
<dbReference type="Ensembl" id="ENSMUST00000021544.8">
    <property type="protein sequence ID" value="ENSMUSP00000021544.8"/>
    <property type="gene ID" value="ENSMUSG00000021118.8"/>
</dbReference>
<dbReference type="GeneID" id="27260"/>
<dbReference type="KEGG" id="mmu:27260"/>
<dbReference type="UCSC" id="uc007nzl.2">
    <property type="organism name" value="mouse"/>
</dbReference>
<dbReference type="AGR" id="MGI:1351466"/>
<dbReference type="CTD" id="26499"/>
<dbReference type="MGI" id="MGI:1351466">
    <property type="gene designation" value="Plek2"/>
</dbReference>
<dbReference type="VEuPathDB" id="HostDB:ENSMUSG00000021118"/>
<dbReference type="eggNOG" id="ENOG502QYJ8">
    <property type="taxonomic scope" value="Eukaryota"/>
</dbReference>
<dbReference type="GeneTree" id="ENSGT00940000157229"/>
<dbReference type="HOGENOM" id="CLU_067828_0_0_1"/>
<dbReference type="InParanoid" id="Q9WV52"/>
<dbReference type="OMA" id="VVRNWKV"/>
<dbReference type="OrthoDB" id="185175at2759"/>
<dbReference type="PhylomeDB" id="Q9WV52"/>
<dbReference type="TreeFam" id="TF332246"/>
<dbReference type="BioGRID-ORCS" id="27260">
    <property type="hits" value="3 hits in 81 CRISPR screens"/>
</dbReference>
<dbReference type="ChiTaRS" id="Plek2">
    <property type="organism name" value="mouse"/>
</dbReference>
<dbReference type="EvolutionaryTrace" id="Q9WV52"/>
<dbReference type="PRO" id="PR:Q9WV52"/>
<dbReference type="Proteomes" id="UP000000589">
    <property type="component" value="Chromosome 12"/>
</dbReference>
<dbReference type="RNAct" id="Q9WV52">
    <property type="molecule type" value="protein"/>
</dbReference>
<dbReference type="Bgee" id="ENSMUSG00000021118">
    <property type="expression patterns" value="Expressed in dorsal pancreas and 124 other cell types or tissues"/>
</dbReference>
<dbReference type="GO" id="GO:0005737">
    <property type="term" value="C:cytoplasm"/>
    <property type="evidence" value="ECO:0007669"/>
    <property type="project" value="UniProtKB-KW"/>
</dbReference>
<dbReference type="GO" id="GO:0005856">
    <property type="term" value="C:cytoskeleton"/>
    <property type="evidence" value="ECO:0007669"/>
    <property type="project" value="UniProtKB-SubCell"/>
</dbReference>
<dbReference type="GO" id="GO:0031258">
    <property type="term" value="C:lamellipodium membrane"/>
    <property type="evidence" value="ECO:0007669"/>
    <property type="project" value="UniProtKB-SubCell"/>
</dbReference>
<dbReference type="GO" id="GO:0016020">
    <property type="term" value="C:membrane"/>
    <property type="evidence" value="ECO:0000314"/>
    <property type="project" value="MGI"/>
</dbReference>
<dbReference type="GO" id="GO:0005886">
    <property type="term" value="C:plasma membrane"/>
    <property type="evidence" value="ECO:0000314"/>
    <property type="project" value="MGI"/>
</dbReference>
<dbReference type="GO" id="GO:0043325">
    <property type="term" value="F:phosphatidylinositol-3,4-bisphosphate binding"/>
    <property type="evidence" value="ECO:0000314"/>
    <property type="project" value="MGI"/>
</dbReference>
<dbReference type="GO" id="GO:0080025">
    <property type="term" value="F:phosphatidylinositol-3,5-bisphosphate binding"/>
    <property type="evidence" value="ECO:0000314"/>
    <property type="project" value="MGI"/>
</dbReference>
<dbReference type="GO" id="GO:0032266">
    <property type="term" value="F:phosphatidylinositol-3-phosphate binding"/>
    <property type="evidence" value="ECO:0000314"/>
    <property type="project" value="MGI"/>
</dbReference>
<dbReference type="GO" id="GO:0030036">
    <property type="term" value="P:actin cytoskeleton organization"/>
    <property type="evidence" value="ECO:0000314"/>
    <property type="project" value="MGI"/>
</dbReference>
<dbReference type="GO" id="GO:0035556">
    <property type="term" value="P:intracellular signal transduction"/>
    <property type="evidence" value="ECO:0007669"/>
    <property type="project" value="InterPro"/>
</dbReference>
<dbReference type="GO" id="GO:0031346">
    <property type="term" value="P:positive regulation of cell projection organization"/>
    <property type="evidence" value="ECO:0000315"/>
    <property type="project" value="MGI"/>
</dbReference>
<dbReference type="GO" id="GO:0120034">
    <property type="term" value="P:positive regulation of plasma membrane bounded cell projection assembly"/>
    <property type="evidence" value="ECO:0000314"/>
    <property type="project" value="MGI"/>
</dbReference>
<dbReference type="CDD" id="cd04444">
    <property type="entry name" value="DEP_PLEK2"/>
    <property type="match status" value="1"/>
</dbReference>
<dbReference type="CDD" id="cd13301">
    <property type="entry name" value="PH1_Pleckstrin_2"/>
    <property type="match status" value="1"/>
</dbReference>
<dbReference type="CDD" id="cd13302">
    <property type="entry name" value="PH2_Pleckstrin_2"/>
    <property type="match status" value="1"/>
</dbReference>
<dbReference type="FunFam" id="1.10.10.10:FF:000312">
    <property type="entry name" value="Pleckstrin 2"/>
    <property type="match status" value="1"/>
</dbReference>
<dbReference type="FunFam" id="2.30.29.30:FF:000208">
    <property type="entry name" value="Pleckstrin 2"/>
    <property type="match status" value="1"/>
</dbReference>
<dbReference type="FunFam" id="2.30.29.30:FF:000243">
    <property type="entry name" value="Pleckstrin 2"/>
    <property type="match status" value="1"/>
</dbReference>
<dbReference type="Gene3D" id="2.30.29.30">
    <property type="entry name" value="Pleckstrin-homology domain (PH domain)/Phosphotyrosine-binding domain (PTB)"/>
    <property type="match status" value="2"/>
</dbReference>
<dbReference type="Gene3D" id="1.10.10.10">
    <property type="entry name" value="Winged helix-like DNA-binding domain superfamily/Winged helix DNA-binding domain"/>
    <property type="match status" value="1"/>
</dbReference>
<dbReference type="InterPro" id="IPR000591">
    <property type="entry name" value="DEP_dom"/>
</dbReference>
<dbReference type="InterPro" id="IPR011993">
    <property type="entry name" value="PH-like_dom_sf"/>
</dbReference>
<dbReference type="InterPro" id="IPR001849">
    <property type="entry name" value="PH_domain"/>
</dbReference>
<dbReference type="InterPro" id="IPR037370">
    <property type="entry name" value="Pleckstrin"/>
</dbReference>
<dbReference type="InterPro" id="IPR037369">
    <property type="entry name" value="PLEK2_DEP"/>
</dbReference>
<dbReference type="InterPro" id="IPR036388">
    <property type="entry name" value="WH-like_DNA-bd_sf"/>
</dbReference>
<dbReference type="InterPro" id="IPR036390">
    <property type="entry name" value="WH_DNA-bd_sf"/>
</dbReference>
<dbReference type="PANTHER" id="PTHR12092">
    <property type="entry name" value="PLECKSTRIN"/>
    <property type="match status" value="1"/>
</dbReference>
<dbReference type="PANTHER" id="PTHR12092:SF2">
    <property type="entry name" value="PLECKSTRIN-2"/>
    <property type="match status" value="1"/>
</dbReference>
<dbReference type="Pfam" id="PF00610">
    <property type="entry name" value="DEP"/>
    <property type="match status" value="1"/>
</dbReference>
<dbReference type="Pfam" id="PF00169">
    <property type="entry name" value="PH"/>
    <property type="match status" value="2"/>
</dbReference>
<dbReference type="SMART" id="SM00049">
    <property type="entry name" value="DEP"/>
    <property type="match status" value="1"/>
</dbReference>
<dbReference type="SMART" id="SM00233">
    <property type="entry name" value="PH"/>
    <property type="match status" value="2"/>
</dbReference>
<dbReference type="SUPFAM" id="SSF50729">
    <property type="entry name" value="PH domain-like"/>
    <property type="match status" value="2"/>
</dbReference>
<dbReference type="SUPFAM" id="SSF46785">
    <property type="entry name" value="Winged helix' DNA-binding domain"/>
    <property type="match status" value="1"/>
</dbReference>
<dbReference type="PROSITE" id="PS50186">
    <property type="entry name" value="DEP"/>
    <property type="match status" value="1"/>
</dbReference>
<dbReference type="PROSITE" id="PS50003">
    <property type="entry name" value="PH_DOMAIN"/>
    <property type="match status" value="2"/>
</dbReference>
<feature type="chain" id="PRO_0000053863" description="Pleckstrin-2">
    <location>
        <begin position="1"/>
        <end position="353"/>
    </location>
</feature>
<feature type="domain" description="PH 1" evidence="3">
    <location>
        <begin position="4"/>
        <end position="104"/>
    </location>
</feature>
<feature type="domain" description="DEP" evidence="2">
    <location>
        <begin position="139"/>
        <end position="225"/>
    </location>
</feature>
<feature type="domain" description="PH 2" evidence="3">
    <location>
        <begin position="247"/>
        <end position="353"/>
    </location>
</feature>
<feature type="modified residue" description="N-acetylmethionine" evidence="1">
    <location>
        <position position="1"/>
    </location>
</feature>
<feature type="modified residue" description="Phosphoserine" evidence="1">
    <location>
        <position position="120"/>
    </location>
</feature>
<feature type="helix" evidence="4">
    <location>
        <begin position="129"/>
        <end position="136"/>
    </location>
</feature>
<feature type="strand" evidence="4">
    <location>
        <begin position="139"/>
        <end position="142"/>
    </location>
</feature>
<feature type="strand" evidence="4">
    <location>
        <begin position="150"/>
        <end position="153"/>
    </location>
</feature>
<feature type="helix" evidence="4">
    <location>
        <begin position="161"/>
        <end position="170"/>
    </location>
</feature>
<feature type="helix" evidence="4">
    <location>
        <begin position="177"/>
        <end position="190"/>
    </location>
</feature>
<feature type="strand" evidence="4">
    <location>
        <begin position="192"/>
        <end position="195"/>
    </location>
</feature>
<feature type="strand" evidence="4">
    <location>
        <begin position="197"/>
        <end position="200"/>
    </location>
</feature>
<feature type="strand" evidence="4">
    <location>
        <begin position="216"/>
        <end position="218"/>
    </location>
</feature>
<feature type="strand" evidence="4">
    <location>
        <begin position="220"/>
        <end position="223"/>
    </location>
</feature>
<feature type="strand" evidence="4">
    <location>
        <begin position="225"/>
        <end position="227"/>
    </location>
</feature>
<feature type="strand" evidence="4">
    <location>
        <begin position="233"/>
        <end position="235"/>
    </location>
</feature>
<organism>
    <name type="scientific">Mus musculus</name>
    <name type="common">Mouse</name>
    <dbReference type="NCBI Taxonomy" id="10090"/>
    <lineage>
        <taxon>Eukaryota</taxon>
        <taxon>Metazoa</taxon>
        <taxon>Chordata</taxon>
        <taxon>Craniata</taxon>
        <taxon>Vertebrata</taxon>
        <taxon>Euteleostomi</taxon>
        <taxon>Mammalia</taxon>
        <taxon>Eutheria</taxon>
        <taxon>Euarchontoglires</taxon>
        <taxon>Glires</taxon>
        <taxon>Rodentia</taxon>
        <taxon>Myomorpha</taxon>
        <taxon>Muroidea</taxon>
        <taxon>Muridae</taxon>
        <taxon>Murinae</taxon>
        <taxon>Mus</taxon>
        <taxon>Mus</taxon>
    </lineage>
</organism>
<proteinExistence type="evidence at protein level"/>
<protein>
    <recommendedName>
        <fullName>Pleckstrin-2</fullName>
    </recommendedName>
</protein>